<evidence type="ECO:0000255" key="1">
    <source>
        <dbReference type="HAMAP-Rule" id="MF_01633"/>
    </source>
</evidence>
<organism>
    <name type="scientific">Campylobacter fetus subsp. fetus (strain 82-40)</name>
    <dbReference type="NCBI Taxonomy" id="360106"/>
    <lineage>
        <taxon>Bacteria</taxon>
        <taxon>Pseudomonadati</taxon>
        <taxon>Campylobacterota</taxon>
        <taxon>Epsilonproteobacteria</taxon>
        <taxon>Campylobacterales</taxon>
        <taxon>Campylobacteraceae</taxon>
        <taxon>Campylobacter</taxon>
    </lineage>
</organism>
<reference key="1">
    <citation type="submission" date="2006-11" db="EMBL/GenBank/DDBJ databases">
        <title>Sequence of Campylobacter fetus subsp. fetus 82-40.</title>
        <authorList>
            <person name="Fouts D.E."/>
            <person name="Nelson K.E."/>
        </authorList>
    </citation>
    <scope>NUCLEOTIDE SEQUENCE [LARGE SCALE GENOMIC DNA]</scope>
    <source>
        <strain>82-40</strain>
    </source>
</reference>
<sequence length="223" mass="24508">MVNLKKAVCVISGGMDSALAAYKAKNSGYEIVALHFDYNQRTMNKERECFNLICDDLDVEKRFILDVGFIAQIGGNALTDKTLNIPKDGISENIPITYVPFRNGIFLSIAAALAQKEGCEAIYIGVVEEDSSGYPDCTEQFINSINKAINLGTADNNIVIKTPLVHLSKGDIVKEASSLKVPLELTWSCYENSEFACGTCDSCRLRLKGFKEAKLSDKIPYKS</sequence>
<keyword id="KW-0067">ATP-binding</keyword>
<keyword id="KW-0436">Ligase</keyword>
<keyword id="KW-0479">Metal-binding</keyword>
<keyword id="KW-0547">Nucleotide-binding</keyword>
<keyword id="KW-0671">Queuosine biosynthesis</keyword>
<keyword id="KW-0862">Zinc</keyword>
<accession>A0RM81</accession>
<name>QUEC_CAMFF</name>
<protein>
    <recommendedName>
        <fullName evidence="1">7-cyano-7-deazaguanine synthase</fullName>
        <ecNumber evidence="1">6.3.4.20</ecNumber>
    </recommendedName>
    <alternativeName>
        <fullName evidence="1">7-cyano-7-carbaguanine synthase</fullName>
    </alternativeName>
    <alternativeName>
        <fullName evidence="1">PreQ(0) synthase</fullName>
    </alternativeName>
    <alternativeName>
        <fullName evidence="1">Queuosine biosynthesis protein QueC</fullName>
    </alternativeName>
</protein>
<dbReference type="EC" id="6.3.4.20" evidence="1"/>
<dbReference type="EMBL" id="CP000487">
    <property type="protein sequence ID" value="ABK82030.1"/>
    <property type="molecule type" value="Genomic_DNA"/>
</dbReference>
<dbReference type="RefSeq" id="WP_002848093.1">
    <property type="nucleotide sequence ID" value="NC_008599.1"/>
</dbReference>
<dbReference type="SMR" id="A0RM81"/>
<dbReference type="GeneID" id="61063949"/>
<dbReference type="KEGG" id="cff:CFF8240_0104"/>
<dbReference type="eggNOG" id="COG0603">
    <property type="taxonomic scope" value="Bacteria"/>
</dbReference>
<dbReference type="HOGENOM" id="CLU_081854_1_0_7"/>
<dbReference type="UniPathway" id="UPA00391"/>
<dbReference type="Proteomes" id="UP000000760">
    <property type="component" value="Chromosome"/>
</dbReference>
<dbReference type="GO" id="GO:0005524">
    <property type="term" value="F:ATP binding"/>
    <property type="evidence" value="ECO:0007669"/>
    <property type="project" value="UniProtKB-UniRule"/>
</dbReference>
<dbReference type="GO" id="GO:0016879">
    <property type="term" value="F:ligase activity, forming carbon-nitrogen bonds"/>
    <property type="evidence" value="ECO:0007669"/>
    <property type="project" value="UniProtKB-UniRule"/>
</dbReference>
<dbReference type="GO" id="GO:0008270">
    <property type="term" value="F:zinc ion binding"/>
    <property type="evidence" value="ECO:0007669"/>
    <property type="project" value="UniProtKB-UniRule"/>
</dbReference>
<dbReference type="GO" id="GO:0008616">
    <property type="term" value="P:queuosine biosynthetic process"/>
    <property type="evidence" value="ECO:0007669"/>
    <property type="project" value="UniProtKB-UniRule"/>
</dbReference>
<dbReference type="CDD" id="cd01995">
    <property type="entry name" value="QueC-like"/>
    <property type="match status" value="1"/>
</dbReference>
<dbReference type="Gene3D" id="3.40.50.620">
    <property type="entry name" value="HUPs"/>
    <property type="match status" value="1"/>
</dbReference>
<dbReference type="HAMAP" id="MF_01633">
    <property type="entry name" value="QueC"/>
    <property type="match status" value="1"/>
</dbReference>
<dbReference type="InterPro" id="IPR018317">
    <property type="entry name" value="QueC"/>
</dbReference>
<dbReference type="InterPro" id="IPR014729">
    <property type="entry name" value="Rossmann-like_a/b/a_fold"/>
</dbReference>
<dbReference type="NCBIfam" id="TIGR00364">
    <property type="entry name" value="7-cyano-7-deazaguanine synthase QueC"/>
    <property type="match status" value="1"/>
</dbReference>
<dbReference type="PANTHER" id="PTHR42914">
    <property type="entry name" value="7-CYANO-7-DEAZAGUANINE SYNTHASE"/>
    <property type="match status" value="1"/>
</dbReference>
<dbReference type="PANTHER" id="PTHR42914:SF1">
    <property type="entry name" value="7-CYANO-7-DEAZAGUANINE SYNTHASE"/>
    <property type="match status" value="1"/>
</dbReference>
<dbReference type="Pfam" id="PF06508">
    <property type="entry name" value="QueC"/>
    <property type="match status" value="1"/>
</dbReference>
<dbReference type="PIRSF" id="PIRSF006293">
    <property type="entry name" value="ExsB"/>
    <property type="match status" value="1"/>
</dbReference>
<dbReference type="SUPFAM" id="SSF52402">
    <property type="entry name" value="Adenine nucleotide alpha hydrolases-like"/>
    <property type="match status" value="1"/>
</dbReference>
<comment type="function">
    <text evidence="1">Catalyzes the ATP-dependent conversion of 7-carboxy-7-deazaguanine (CDG) to 7-cyano-7-deazaguanine (preQ(0)).</text>
</comment>
<comment type="catalytic activity">
    <reaction evidence="1">
        <text>7-carboxy-7-deazaguanine + NH4(+) + ATP = 7-cyano-7-deazaguanine + ADP + phosphate + H2O + H(+)</text>
        <dbReference type="Rhea" id="RHEA:27982"/>
        <dbReference type="ChEBI" id="CHEBI:15377"/>
        <dbReference type="ChEBI" id="CHEBI:15378"/>
        <dbReference type="ChEBI" id="CHEBI:28938"/>
        <dbReference type="ChEBI" id="CHEBI:30616"/>
        <dbReference type="ChEBI" id="CHEBI:43474"/>
        <dbReference type="ChEBI" id="CHEBI:45075"/>
        <dbReference type="ChEBI" id="CHEBI:61036"/>
        <dbReference type="ChEBI" id="CHEBI:456216"/>
        <dbReference type="EC" id="6.3.4.20"/>
    </reaction>
</comment>
<comment type="cofactor">
    <cofactor evidence="1">
        <name>Zn(2+)</name>
        <dbReference type="ChEBI" id="CHEBI:29105"/>
    </cofactor>
    <text evidence="1">Binds 1 zinc ion per subunit.</text>
</comment>
<comment type="pathway">
    <text evidence="1">Purine metabolism; 7-cyano-7-deazaguanine biosynthesis.</text>
</comment>
<comment type="similarity">
    <text evidence="1">Belongs to the QueC family.</text>
</comment>
<proteinExistence type="inferred from homology"/>
<feature type="chain" id="PRO_0000336901" description="7-cyano-7-deazaguanine synthase">
    <location>
        <begin position="1"/>
        <end position="223"/>
    </location>
</feature>
<feature type="binding site" evidence="1">
    <location>
        <begin position="11"/>
        <end position="21"/>
    </location>
    <ligand>
        <name>ATP</name>
        <dbReference type="ChEBI" id="CHEBI:30616"/>
    </ligand>
</feature>
<feature type="binding site" evidence="1">
    <location>
        <position position="189"/>
    </location>
    <ligand>
        <name>Zn(2+)</name>
        <dbReference type="ChEBI" id="CHEBI:29105"/>
    </ligand>
</feature>
<feature type="binding site" evidence="1">
    <location>
        <position position="197"/>
    </location>
    <ligand>
        <name>Zn(2+)</name>
        <dbReference type="ChEBI" id="CHEBI:29105"/>
    </ligand>
</feature>
<feature type="binding site" evidence="1">
    <location>
        <position position="200"/>
    </location>
    <ligand>
        <name>Zn(2+)</name>
        <dbReference type="ChEBI" id="CHEBI:29105"/>
    </ligand>
</feature>
<feature type="binding site" evidence="1">
    <location>
        <position position="203"/>
    </location>
    <ligand>
        <name>Zn(2+)</name>
        <dbReference type="ChEBI" id="CHEBI:29105"/>
    </ligand>
</feature>
<gene>
    <name evidence="1" type="primary">queC</name>
    <name type="ordered locus">CFF8240_0104</name>
</gene>